<accession>P9WHA5</accession>
<accession>L0T796</accession>
<accession>P95052</accession>
<name>RL2_MYCTU</name>
<organism>
    <name type="scientific">Mycobacterium tuberculosis (strain ATCC 25618 / H37Rv)</name>
    <dbReference type="NCBI Taxonomy" id="83332"/>
    <lineage>
        <taxon>Bacteria</taxon>
        <taxon>Bacillati</taxon>
        <taxon>Actinomycetota</taxon>
        <taxon>Actinomycetes</taxon>
        <taxon>Mycobacteriales</taxon>
        <taxon>Mycobacteriaceae</taxon>
        <taxon>Mycobacterium</taxon>
        <taxon>Mycobacterium tuberculosis complex</taxon>
    </lineage>
</organism>
<gene>
    <name evidence="1" type="primary">rplB</name>
    <name type="ordered locus">Rv0704</name>
    <name type="ORF">MTCY210.23</name>
</gene>
<comment type="function">
    <text evidence="1">One of the primary rRNA binding proteins. Required for association of the 30S and 50S subunits to form the 70S ribosome, for tRNA binding and peptide bond formation. It has been suggested to have peptidyltransferase activity; this is somewhat controversial. Makes several contacts with the 16S rRNA in the 70S ribosome.</text>
</comment>
<comment type="subunit">
    <text evidence="1">Part of the 50S ribosomal subunit. Forms a bridge to the 30S subunit in the 70S ribosome.</text>
</comment>
<comment type="similarity">
    <text evidence="1">Belongs to the universal ribosomal protein uL2 family.</text>
</comment>
<reference key="1">
    <citation type="journal article" date="1998" name="Nature">
        <title>Deciphering the biology of Mycobacterium tuberculosis from the complete genome sequence.</title>
        <authorList>
            <person name="Cole S.T."/>
            <person name="Brosch R."/>
            <person name="Parkhill J."/>
            <person name="Garnier T."/>
            <person name="Churcher C.M."/>
            <person name="Harris D.E."/>
            <person name="Gordon S.V."/>
            <person name="Eiglmeier K."/>
            <person name="Gas S."/>
            <person name="Barry C.E. III"/>
            <person name="Tekaia F."/>
            <person name="Badcock K."/>
            <person name="Basham D."/>
            <person name="Brown D."/>
            <person name="Chillingworth T."/>
            <person name="Connor R."/>
            <person name="Davies R.M."/>
            <person name="Devlin K."/>
            <person name="Feltwell T."/>
            <person name="Gentles S."/>
            <person name="Hamlin N."/>
            <person name="Holroyd S."/>
            <person name="Hornsby T."/>
            <person name="Jagels K."/>
            <person name="Krogh A."/>
            <person name="McLean J."/>
            <person name="Moule S."/>
            <person name="Murphy L.D."/>
            <person name="Oliver S."/>
            <person name="Osborne J."/>
            <person name="Quail M.A."/>
            <person name="Rajandream M.A."/>
            <person name="Rogers J."/>
            <person name="Rutter S."/>
            <person name="Seeger K."/>
            <person name="Skelton S."/>
            <person name="Squares S."/>
            <person name="Squares R."/>
            <person name="Sulston J.E."/>
            <person name="Taylor K."/>
            <person name="Whitehead S."/>
            <person name="Barrell B.G."/>
        </authorList>
    </citation>
    <scope>NUCLEOTIDE SEQUENCE [LARGE SCALE GENOMIC DNA]</scope>
    <source>
        <strain>ATCC 25618 / H37Rv</strain>
    </source>
</reference>
<reference key="2">
    <citation type="journal article" date="2011" name="Mol. Cell. Proteomics">
        <title>Proteogenomic analysis of Mycobacterium tuberculosis by high resolution mass spectrometry.</title>
        <authorList>
            <person name="Kelkar D.S."/>
            <person name="Kumar D."/>
            <person name="Kumar P."/>
            <person name="Balakrishnan L."/>
            <person name="Muthusamy B."/>
            <person name="Yadav A.K."/>
            <person name="Shrivastava P."/>
            <person name="Marimuthu A."/>
            <person name="Anand S."/>
            <person name="Sundaram H."/>
            <person name="Kingsbury R."/>
            <person name="Harsha H.C."/>
            <person name="Nair B."/>
            <person name="Prasad T.S."/>
            <person name="Chauhan D.S."/>
            <person name="Katoch K."/>
            <person name="Katoch V.M."/>
            <person name="Kumar P."/>
            <person name="Chaerkady R."/>
            <person name="Ramachandran S."/>
            <person name="Dash D."/>
            <person name="Pandey A."/>
        </authorList>
    </citation>
    <scope>IDENTIFICATION BY MASS SPECTROMETRY [LARGE SCALE ANALYSIS]</scope>
    <source>
        <strain>ATCC 25618 / H37Rv</strain>
    </source>
</reference>
<dbReference type="EMBL" id="AL123456">
    <property type="protein sequence ID" value="CCP43448.1"/>
    <property type="molecule type" value="Genomic_DNA"/>
</dbReference>
<dbReference type="PIR" id="C70642">
    <property type="entry name" value="C70642"/>
</dbReference>
<dbReference type="RefSeq" id="NP_215218.1">
    <property type="nucleotide sequence ID" value="NC_000962.3"/>
</dbReference>
<dbReference type="RefSeq" id="WP_003403582.1">
    <property type="nucleotide sequence ID" value="NZ_NVQJ01000007.1"/>
</dbReference>
<dbReference type="PDB" id="5V7Q">
    <property type="method" value="EM"/>
    <property type="resolution" value="3.70 A"/>
    <property type="chains" value="C=1-280"/>
</dbReference>
<dbReference type="PDB" id="7KGB">
    <property type="method" value="EM"/>
    <property type="resolution" value="2.70 A"/>
    <property type="chains" value="C=1-280"/>
</dbReference>
<dbReference type="PDB" id="7MSC">
    <property type="method" value="EM"/>
    <property type="resolution" value="2.97 A"/>
    <property type="chains" value="C=1-280"/>
</dbReference>
<dbReference type="PDB" id="7MSH">
    <property type="method" value="EM"/>
    <property type="resolution" value="3.23 A"/>
    <property type="chains" value="C=1-280"/>
</dbReference>
<dbReference type="PDB" id="7MSM">
    <property type="method" value="EM"/>
    <property type="resolution" value="2.79 A"/>
    <property type="chains" value="C=1-280"/>
</dbReference>
<dbReference type="PDB" id="7MSZ">
    <property type="method" value="EM"/>
    <property type="resolution" value="3.10 A"/>
    <property type="chains" value="C=1-280"/>
</dbReference>
<dbReference type="PDB" id="7MT2">
    <property type="method" value="EM"/>
    <property type="resolution" value="2.76 A"/>
    <property type="chains" value="C=1-280"/>
</dbReference>
<dbReference type="PDB" id="7MT3">
    <property type="method" value="EM"/>
    <property type="resolution" value="2.80 A"/>
    <property type="chains" value="C=1-280"/>
</dbReference>
<dbReference type="PDB" id="7MT7">
    <property type="method" value="EM"/>
    <property type="resolution" value="2.71 A"/>
    <property type="chains" value="C=1-280"/>
</dbReference>
<dbReference type="PDB" id="7SFR">
    <property type="method" value="EM"/>
    <property type="resolution" value="2.60 A"/>
    <property type="chains" value="C=2-280"/>
</dbReference>
<dbReference type="PDBsum" id="5V7Q"/>
<dbReference type="PDBsum" id="7KGB"/>
<dbReference type="PDBsum" id="7MSC"/>
<dbReference type="PDBsum" id="7MSH"/>
<dbReference type="PDBsum" id="7MSM"/>
<dbReference type="PDBsum" id="7MSZ"/>
<dbReference type="PDBsum" id="7MT2"/>
<dbReference type="PDBsum" id="7MT3"/>
<dbReference type="PDBsum" id="7MT7"/>
<dbReference type="PDBsum" id="7SFR"/>
<dbReference type="EMDB" id="EMD-22865"/>
<dbReference type="EMDB" id="EMD-23961"/>
<dbReference type="EMDB" id="EMD-23962"/>
<dbReference type="EMDB" id="EMD-23969"/>
<dbReference type="EMDB" id="EMD-23972"/>
<dbReference type="EMDB" id="EMD-23974"/>
<dbReference type="EMDB" id="EMD-23975"/>
<dbReference type="EMDB" id="EMD-23976"/>
<dbReference type="SMR" id="P9WHA5"/>
<dbReference type="FunCoup" id="P9WHA5">
    <property type="interactions" value="410"/>
</dbReference>
<dbReference type="STRING" id="83332.Rv0704"/>
<dbReference type="PaxDb" id="83332-Rv0704"/>
<dbReference type="DNASU" id="888341"/>
<dbReference type="GeneID" id="45424669"/>
<dbReference type="GeneID" id="888341"/>
<dbReference type="KEGG" id="mtu:Rv0704"/>
<dbReference type="KEGG" id="mtv:RVBD_0704"/>
<dbReference type="TubercuList" id="Rv0704"/>
<dbReference type="eggNOG" id="COG0090">
    <property type="taxonomic scope" value="Bacteria"/>
</dbReference>
<dbReference type="InParanoid" id="P9WHA5"/>
<dbReference type="OrthoDB" id="9778722at2"/>
<dbReference type="PhylomeDB" id="P9WHA5"/>
<dbReference type="PRO" id="PR:P9WHA5"/>
<dbReference type="Proteomes" id="UP000001584">
    <property type="component" value="Chromosome"/>
</dbReference>
<dbReference type="GO" id="GO:0015934">
    <property type="term" value="C:large ribosomal subunit"/>
    <property type="evidence" value="ECO:0007669"/>
    <property type="project" value="InterPro"/>
</dbReference>
<dbReference type="GO" id="GO:0005886">
    <property type="term" value="C:plasma membrane"/>
    <property type="evidence" value="ECO:0007005"/>
    <property type="project" value="MTBBASE"/>
</dbReference>
<dbReference type="GO" id="GO:0003723">
    <property type="term" value="F:RNA binding"/>
    <property type="evidence" value="ECO:0000318"/>
    <property type="project" value="GO_Central"/>
</dbReference>
<dbReference type="GO" id="GO:0019843">
    <property type="term" value="F:rRNA binding"/>
    <property type="evidence" value="ECO:0007669"/>
    <property type="project" value="UniProtKB-UniRule"/>
</dbReference>
<dbReference type="GO" id="GO:0003735">
    <property type="term" value="F:structural constituent of ribosome"/>
    <property type="evidence" value="ECO:0000318"/>
    <property type="project" value="GO_Central"/>
</dbReference>
<dbReference type="GO" id="GO:0016740">
    <property type="term" value="F:transferase activity"/>
    <property type="evidence" value="ECO:0007669"/>
    <property type="project" value="InterPro"/>
</dbReference>
<dbReference type="GO" id="GO:0002181">
    <property type="term" value="P:cytoplasmic translation"/>
    <property type="evidence" value="ECO:0000318"/>
    <property type="project" value="GO_Central"/>
</dbReference>
<dbReference type="FunFam" id="2.30.30.30:FF:000001">
    <property type="entry name" value="50S ribosomal protein L2"/>
    <property type="match status" value="1"/>
</dbReference>
<dbReference type="FunFam" id="2.40.50.140:FF:000003">
    <property type="entry name" value="50S ribosomal protein L2"/>
    <property type="match status" value="1"/>
</dbReference>
<dbReference type="FunFam" id="4.10.950.10:FF:000001">
    <property type="entry name" value="50S ribosomal protein L2"/>
    <property type="match status" value="1"/>
</dbReference>
<dbReference type="Gene3D" id="2.30.30.30">
    <property type="match status" value="1"/>
</dbReference>
<dbReference type="Gene3D" id="2.40.50.140">
    <property type="entry name" value="Nucleic acid-binding proteins"/>
    <property type="match status" value="1"/>
</dbReference>
<dbReference type="Gene3D" id="4.10.950.10">
    <property type="entry name" value="Ribosomal protein L2, domain 3"/>
    <property type="match status" value="1"/>
</dbReference>
<dbReference type="HAMAP" id="MF_01320_B">
    <property type="entry name" value="Ribosomal_uL2_B"/>
    <property type="match status" value="1"/>
</dbReference>
<dbReference type="InterPro" id="IPR012340">
    <property type="entry name" value="NA-bd_OB-fold"/>
</dbReference>
<dbReference type="InterPro" id="IPR014722">
    <property type="entry name" value="Rib_uL2_dom2"/>
</dbReference>
<dbReference type="InterPro" id="IPR002171">
    <property type="entry name" value="Ribosomal_uL2"/>
</dbReference>
<dbReference type="InterPro" id="IPR005880">
    <property type="entry name" value="Ribosomal_uL2_bac/org-type"/>
</dbReference>
<dbReference type="InterPro" id="IPR022669">
    <property type="entry name" value="Ribosomal_uL2_C"/>
</dbReference>
<dbReference type="InterPro" id="IPR022671">
    <property type="entry name" value="Ribosomal_uL2_CS"/>
</dbReference>
<dbReference type="InterPro" id="IPR014726">
    <property type="entry name" value="Ribosomal_uL2_dom3"/>
</dbReference>
<dbReference type="InterPro" id="IPR022666">
    <property type="entry name" value="Ribosomal_uL2_RNA-bd_dom"/>
</dbReference>
<dbReference type="InterPro" id="IPR008991">
    <property type="entry name" value="Translation_prot_SH3-like_sf"/>
</dbReference>
<dbReference type="NCBIfam" id="TIGR01171">
    <property type="entry name" value="rplB_bact"/>
    <property type="match status" value="1"/>
</dbReference>
<dbReference type="PANTHER" id="PTHR13691:SF5">
    <property type="entry name" value="LARGE RIBOSOMAL SUBUNIT PROTEIN UL2M"/>
    <property type="match status" value="1"/>
</dbReference>
<dbReference type="PANTHER" id="PTHR13691">
    <property type="entry name" value="RIBOSOMAL PROTEIN L2"/>
    <property type="match status" value="1"/>
</dbReference>
<dbReference type="Pfam" id="PF00181">
    <property type="entry name" value="Ribosomal_L2"/>
    <property type="match status" value="1"/>
</dbReference>
<dbReference type="Pfam" id="PF03947">
    <property type="entry name" value="Ribosomal_L2_C"/>
    <property type="match status" value="1"/>
</dbReference>
<dbReference type="PIRSF" id="PIRSF002158">
    <property type="entry name" value="Ribosomal_L2"/>
    <property type="match status" value="1"/>
</dbReference>
<dbReference type="SMART" id="SM01383">
    <property type="entry name" value="Ribosomal_L2"/>
    <property type="match status" value="1"/>
</dbReference>
<dbReference type="SMART" id="SM01382">
    <property type="entry name" value="Ribosomal_L2_C"/>
    <property type="match status" value="1"/>
</dbReference>
<dbReference type="SUPFAM" id="SSF50249">
    <property type="entry name" value="Nucleic acid-binding proteins"/>
    <property type="match status" value="1"/>
</dbReference>
<dbReference type="SUPFAM" id="SSF50104">
    <property type="entry name" value="Translation proteins SH3-like domain"/>
    <property type="match status" value="1"/>
</dbReference>
<dbReference type="PROSITE" id="PS00467">
    <property type="entry name" value="RIBOSOMAL_L2"/>
    <property type="match status" value="1"/>
</dbReference>
<evidence type="ECO:0000255" key="1">
    <source>
        <dbReference type="HAMAP-Rule" id="MF_01320"/>
    </source>
</evidence>
<evidence type="ECO:0000256" key="2">
    <source>
        <dbReference type="SAM" id="MobiDB-lite"/>
    </source>
</evidence>
<evidence type="ECO:0000305" key="3"/>
<sequence length="280" mass="30577">MAIRKYKPTTPGRRGASVSDFAEITRSTPEKSLVRPLHGRGGRNAHGRITTRHKGGGHKRAYRMIDFRRNDKDGVNAKVAHIEYDPNRTARIALLHYLDGEKRYIIAPNGLSQGDVVESGANADIKPGNNLPLRNIPAGTLIHAVELRPGGGAKLARSAGSSIQLLGKEASYASLRMPSGEIRRVDVRCRATVGEVGNAEQANINWGKAGRMRWKGKRPSVRGVVMNPVDHPHGGGEGKTSGGRHPVSPWGKPEGRTRNANKSSNKFIVRRRRTGKKHSR</sequence>
<feature type="chain" id="PRO_0000129587" description="Large ribosomal subunit protein uL2">
    <location>
        <begin position="1"/>
        <end position="280"/>
    </location>
</feature>
<feature type="region of interest" description="Disordered" evidence="2">
    <location>
        <begin position="27"/>
        <end position="59"/>
    </location>
</feature>
<feature type="region of interest" description="Disordered" evidence="2">
    <location>
        <begin position="225"/>
        <end position="280"/>
    </location>
</feature>
<feature type="compositionally biased region" description="Basic residues" evidence="2">
    <location>
        <begin position="37"/>
        <end position="59"/>
    </location>
</feature>
<feature type="compositionally biased region" description="Basic residues" evidence="2">
    <location>
        <begin position="268"/>
        <end position="280"/>
    </location>
</feature>
<proteinExistence type="evidence at protein level"/>
<protein>
    <recommendedName>
        <fullName evidence="1">Large ribosomal subunit protein uL2</fullName>
    </recommendedName>
    <alternativeName>
        <fullName evidence="3">50S ribosomal protein L2</fullName>
    </alternativeName>
</protein>
<keyword id="KW-0002">3D-structure</keyword>
<keyword id="KW-1185">Reference proteome</keyword>
<keyword id="KW-0687">Ribonucleoprotein</keyword>
<keyword id="KW-0689">Ribosomal protein</keyword>
<keyword id="KW-0694">RNA-binding</keyword>
<keyword id="KW-0699">rRNA-binding</keyword>